<gene>
    <name evidence="1" type="primary">recX</name>
    <name type="ordered locus">OB0893</name>
</gene>
<keyword id="KW-0963">Cytoplasm</keyword>
<keyword id="KW-1185">Reference proteome</keyword>
<feature type="chain" id="PRO_0000162455" description="Regulatory protein RecX">
    <location>
        <begin position="1"/>
        <end position="272"/>
    </location>
</feature>
<name>RECX_OCEIH</name>
<dbReference type="EMBL" id="BA000028">
    <property type="protein sequence ID" value="BAC12849.1"/>
    <property type="molecule type" value="Genomic_DNA"/>
</dbReference>
<dbReference type="RefSeq" id="WP_011065299.1">
    <property type="nucleotide sequence ID" value="NC_004193.1"/>
</dbReference>
<dbReference type="SMR" id="Q8CV64"/>
<dbReference type="STRING" id="221109.gene:10733114"/>
<dbReference type="KEGG" id="oih:OB0893"/>
<dbReference type="eggNOG" id="COG2137">
    <property type="taxonomic scope" value="Bacteria"/>
</dbReference>
<dbReference type="HOGENOM" id="CLU_066607_4_0_9"/>
<dbReference type="OrthoDB" id="5421057at2"/>
<dbReference type="PhylomeDB" id="Q8CV64"/>
<dbReference type="Proteomes" id="UP000000822">
    <property type="component" value="Chromosome"/>
</dbReference>
<dbReference type="GO" id="GO:0005737">
    <property type="term" value="C:cytoplasm"/>
    <property type="evidence" value="ECO:0007669"/>
    <property type="project" value="UniProtKB-SubCell"/>
</dbReference>
<dbReference type="GO" id="GO:0006282">
    <property type="term" value="P:regulation of DNA repair"/>
    <property type="evidence" value="ECO:0007669"/>
    <property type="project" value="UniProtKB-UniRule"/>
</dbReference>
<dbReference type="Gene3D" id="1.10.10.10">
    <property type="entry name" value="Winged helix-like DNA-binding domain superfamily/Winged helix DNA-binding domain"/>
    <property type="match status" value="4"/>
</dbReference>
<dbReference type="HAMAP" id="MF_01114">
    <property type="entry name" value="RecX"/>
    <property type="match status" value="1"/>
</dbReference>
<dbReference type="InterPro" id="IPR053926">
    <property type="entry name" value="RecX_HTH_1st"/>
</dbReference>
<dbReference type="InterPro" id="IPR053924">
    <property type="entry name" value="RecX_HTH_2nd"/>
</dbReference>
<dbReference type="InterPro" id="IPR053925">
    <property type="entry name" value="RecX_HTH_3rd"/>
</dbReference>
<dbReference type="InterPro" id="IPR003783">
    <property type="entry name" value="Regulatory_RecX"/>
</dbReference>
<dbReference type="InterPro" id="IPR036388">
    <property type="entry name" value="WH-like_DNA-bd_sf"/>
</dbReference>
<dbReference type="NCBIfam" id="NF010733">
    <property type="entry name" value="PRK14135.1"/>
    <property type="match status" value="1"/>
</dbReference>
<dbReference type="PANTHER" id="PTHR33602">
    <property type="entry name" value="REGULATORY PROTEIN RECX FAMILY PROTEIN"/>
    <property type="match status" value="1"/>
</dbReference>
<dbReference type="PANTHER" id="PTHR33602:SF1">
    <property type="entry name" value="REGULATORY PROTEIN RECX FAMILY PROTEIN"/>
    <property type="match status" value="1"/>
</dbReference>
<dbReference type="Pfam" id="PF21982">
    <property type="entry name" value="RecX_HTH1"/>
    <property type="match status" value="1"/>
</dbReference>
<dbReference type="Pfam" id="PF02631">
    <property type="entry name" value="RecX_HTH2"/>
    <property type="match status" value="1"/>
</dbReference>
<dbReference type="Pfam" id="PF21981">
    <property type="entry name" value="RecX_HTH3"/>
    <property type="match status" value="2"/>
</dbReference>
<sequence length="272" mass="32054">MKKIARITTQKKHKNRYNIFLQTPDGGDAYGFSVDEAILIEYRLSKGMELEDEMISILEQKDTLHKAYTLTIHFLSYRMRSEKEVSDYLQKKEVDEEHIAEIIKRLKKEKWVDDQQFAEMFVRSRINSSSKGPKMIQQELFEKGVDGSKITSALEQYPVEEQKQKVEKLISKKLQSKSKDSHQKRIDQIKQNLMQKGFDSGVISMVIQQMDTTEDTDREWEVLQLQGEKLLYKYQKKHSGFALKQKVMEGLYRKGFSFDMINQFIDQSLQDE</sequence>
<protein>
    <recommendedName>
        <fullName evidence="1">Regulatory protein RecX</fullName>
    </recommendedName>
</protein>
<organism>
    <name type="scientific">Oceanobacillus iheyensis (strain DSM 14371 / CIP 107618 / JCM 11309 / KCTC 3954 / HTE831)</name>
    <dbReference type="NCBI Taxonomy" id="221109"/>
    <lineage>
        <taxon>Bacteria</taxon>
        <taxon>Bacillati</taxon>
        <taxon>Bacillota</taxon>
        <taxon>Bacilli</taxon>
        <taxon>Bacillales</taxon>
        <taxon>Bacillaceae</taxon>
        <taxon>Oceanobacillus</taxon>
    </lineage>
</organism>
<comment type="function">
    <text evidence="1">Modulates RecA activity.</text>
</comment>
<comment type="subcellular location">
    <subcellularLocation>
        <location evidence="1">Cytoplasm</location>
    </subcellularLocation>
</comment>
<comment type="similarity">
    <text evidence="1">Belongs to the RecX family.</text>
</comment>
<evidence type="ECO:0000255" key="1">
    <source>
        <dbReference type="HAMAP-Rule" id="MF_01114"/>
    </source>
</evidence>
<proteinExistence type="inferred from homology"/>
<accession>Q8CV64</accession>
<reference key="1">
    <citation type="journal article" date="2002" name="Nucleic Acids Res.">
        <title>Genome sequence of Oceanobacillus iheyensis isolated from the Iheya Ridge and its unexpected adaptive capabilities to extreme environments.</title>
        <authorList>
            <person name="Takami H."/>
            <person name="Takaki Y."/>
            <person name="Uchiyama I."/>
        </authorList>
    </citation>
    <scope>NUCLEOTIDE SEQUENCE [LARGE SCALE GENOMIC DNA]</scope>
    <source>
        <strain>DSM 14371 / CIP 107618 / JCM 11309 / KCTC 3954 / HTE831</strain>
    </source>
</reference>